<name>DNAT_SALA4</name>
<feature type="chain" id="PRO_1000136437" description="Replication restart protein DnaT">
    <location>
        <begin position="1"/>
        <end position="179"/>
    </location>
</feature>
<feature type="region of interest" description="Disordered" evidence="2">
    <location>
        <begin position="151"/>
        <end position="179"/>
    </location>
</feature>
<feature type="compositionally biased region" description="Polar residues" evidence="2">
    <location>
        <begin position="151"/>
        <end position="168"/>
    </location>
</feature>
<organism>
    <name type="scientific">Salmonella agona (strain SL483)</name>
    <dbReference type="NCBI Taxonomy" id="454166"/>
    <lineage>
        <taxon>Bacteria</taxon>
        <taxon>Pseudomonadati</taxon>
        <taxon>Pseudomonadota</taxon>
        <taxon>Gammaproteobacteria</taxon>
        <taxon>Enterobacterales</taxon>
        <taxon>Enterobacteriaceae</taxon>
        <taxon>Salmonella</taxon>
    </lineage>
</organism>
<gene>
    <name evidence="1" type="primary">dnaT</name>
    <name type="ordered locus">SeAg_B4865</name>
</gene>
<accession>B5F503</accession>
<evidence type="ECO:0000255" key="1">
    <source>
        <dbReference type="HAMAP-Rule" id="MF_01061"/>
    </source>
</evidence>
<evidence type="ECO:0000256" key="2">
    <source>
        <dbReference type="SAM" id="MobiDB-lite"/>
    </source>
</evidence>
<sequence length="179" mass="19478">MSSRILTSDVIGIDALLHDHHAVLAKSTGGAVAVFANNAPAFYAVTPARMAELLALEEKLSRPGSDVALDAQFYEEPEAAPVAIPCGKFAMYPAWQPDADFQRQAALWGVALREPVTAEELAAFIAYWQAEGKVFHHIQWQQKLARSVQISRSSNGGMPQRDINSVSEPDNHIPPGFRG</sequence>
<protein>
    <recommendedName>
        <fullName evidence="1">Replication restart protein DnaT</fullName>
    </recommendedName>
</protein>
<comment type="function">
    <text evidence="1">Involved in the restart of stalled replication forks, which reloads the replicative helicase on sites other than the origin of replication. Can function in multiple replication restart pathways. Displaces ssDNA from a PriB-ssDNA complex. Probably forms a spiral filament on ssDNA.</text>
</comment>
<comment type="subunit">
    <text evidence="1">Homooligomerizes. Interacts with PriB. Component of the replication restart primosome. Primosome assembly occurs via a 'hand-off' mechanism. PriA binds to replication forks, subsequently PriB then DnaT bind; DnaT then displaces ssDNA to generate the helicase loading substrate.</text>
</comment>
<comment type="similarity">
    <text evidence="1">Belongs to the DnaT family.</text>
</comment>
<reference key="1">
    <citation type="journal article" date="2011" name="J. Bacteriol.">
        <title>Comparative genomics of 28 Salmonella enterica isolates: evidence for CRISPR-mediated adaptive sublineage evolution.</title>
        <authorList>
            <person name="Fricke W.F."/>
            <person name="Mammel M.K."/>
            <person name="McDermott P.F."/>
            <person name="Tartera C."/>
            <person name="White D.G."/>
            <person name="Leclerc J.E."/>
            <person name="Ravel J."/>
            <person name="Cebula T.A."/>
        </authorList>
    </citation>
    <scope>NUCLEOTIDE SEQUENCE [LARGE SCALE GENOMIC DNA]</scope>
    <source>
        <strain>SL483</strain>
    </source>
</reference>
<keyword id="KW-0235">DNA replication</keyword>
<keyword id="KW-0238">DNA-binding</keyword>
<keyword id="KW-0639">Primosome</keyword>
<proteinExistence type="inferred from homology"/>
<dbReference type="EMBL" id="CP001138">
    <property type="protein sequence ID" value="ACH52710.1"/>
    <property type="molecule type" value="Genomic_DNA"/>
</dbReference>
<dbReference type="RefSeq" id="WP_000098573.1">
    <property type="nucleotide sequence ID" value="NC_011149.1"/>
</dbReference>
<dbReference type="SMR" id="B5F503"/>
<dbReference type="KEGG" id="sea:SeAg_B4865"/>
<dbReference type="HOGENOM" id="CLU_1501592_0_0_6"/>
<dbReference type="Proteomes" id="UP000008819">
    <property type="component" value="Chromosome"/>
</dbReference>
<dbReference type="GO" id="GO:1990077">
    <property type="term" value="C:primosome complex"/>
    <property type="evidence" value="ECO:0007669"/>
    <property type="project" value="UniProtKB-KW"/>
</dbReference>
<dbReference type="GO" id="GO:0006269">
    <property type="term" value="P:DNA replication, synthesis of primer"/>
    <property type="evidence" value="ECO:0007669"/>
    <property type="project" value="UniProtKB-UniRule"/>
</dbReference>
<dbReference type="Gene3D" id="1.10.8.1180">
    <property type="match status" value="1"/>
</dbReference>
<dbReference type="HAMAP" id="MF_01061">
    <property type="entry name" value="DnaT"/>
    <property type="match status" value="1"/>
</dbReference>
<dbReference type="InterPro" id="IPR020917">
    <property type="entry name" value="DnaT"/>
</dbReference>
<dbReference type="InterPro" id="IPR040480">
    <property type="entry name" value="DnaT_DNA_bind"/>
</dbReference>
<dbReference type="NCBIfam" id="NF002770">
    <property type="entry name" value="PRK02854.1"/>
    <property type="match status" value="1"/>
</dbReference>
<dbReference type="Pfam" id="PF17948">
    <property type="entry name" value="DnaT"/>
    <property type="match status" value="1"/>
</dbReference>